<dbReference type="EC" id="1.5.98.3" evidence="5"/>
<dbReference type="EMBL" id="AF228525">
    <property type="protein sequence ID" value="AAF65732.1"/>
    <property type="molecule type" value="Genomic_DNA"/>
</dbReference>
<dbReference type="EMBL" id="AE008384">
    <property type="protein sequence ID" value="AAM32186.1"/>
    <property type="molecule type" value="Genomic_DNA"/>
</dbReference>
<dbReference type="RefSeq" id="WP_011034408.1">
    <property type="nucleotide sequence ID" value="NC_003901.1"/>
</dbReference>
<dbReference type="SMR" id="F1SVH7"/>
<dbReference type="TCDB" id="3.D.9.1.1">
    <property type="family name" value="the h(+)-translocating f420h2 dehydrogenase (f420h2dh) family"/>
</dbReference>
<dbReference type="GeneID" id="82161566"/>
<dbReference type="KEGG" id="mma:MM_2490"/>
<dbReference type="PATRIC" id="fig|192952.21.peg.2849"/>
<dbReference type="eggNOG" id="arCOG01554">
    <property type="taxonomic scope" value="Archaea"/>
</dbReference>
<dbReference type="HOGENOM" id="CLU_055737_7_3_2"/>
<dbReference type="BioCyc" id="MetaCyc:MONOMER-12224"/>
<dbReference type="BRENDA" id="1.12.98.3">
    <property type="organism ID" value="3270"/>
</dbReference>
<dbReference type="Proteomes" id="UP000000595">
    <property type="component" value="Chromosome"/>
</dbReference>
<dbReference type="GO" id="GO:0005886">
    <property type="term" value="C:plasma membrane"/>
    <property type="evidence" value="ECO:0007669"/>
    <property type="project" value="UniProtKB-SubCell"/>
</dbReference>
<dbReference type="GO" id="GO:0045271">
    <property type="term" value="C:respiratory chain complex I"/>
    <property type="evidence" value="ECO:0007669"/>
    <property type="project" value="TreeGrafter"/>
</dbReference>
<dbReference type="GO" id="GO:0051539">
    <property type="term" value="F:4 iron, 4 sulfur cluster binding"/>
    <property type="evidence" value="ECO:0007669"/>
    <property type="project" value="UniProtKB-KW"/>
</dbReference>
<dbReference type="GO" id="GO:0046872">
    <property type="term" value="F:metal ion binding"/>
    <property type="evidence" value="ECO:0007669"/>
    <property type="project" value="UniProtKB-KW"/>
</dbReference>
<dbReference type="GO" id="GO:0051911">
    <property type="term" value="F:Methanosarcina-phenazine hydrogenase activity"/>
    <property type="evidence" value="ECO:0007669"/>
    <property type="project" value="UniProtKB-EC"/>
</dbReference>
<dbReference type="GO" id="GO:0008137">
    <property type="term" value="F:NADH dehydrogenase (ubiquinone) activity"/>
    <property type="evidence" value="ECO:0007669"/>
    <property type="project" value="InterPro"/>
</dbReference>
<dbReference type="GO" id="GO:0048038">
    <property type="term" value="F:quinone binding"/>
    <property type="evidence" value="ECO:0007669"/>
    <property type="project" value="InterPro"/>
</dbReference>
<dbReference type="GO" id="GO:0043738">
    <property type="term" value="F:reduced coenzyme F420 dehydrogenase activity"/>
    <property type="evidence" value="ECO:0007669"/>
    <property type="project" value="RHEA"/>
</dbReference>
<dbReference type="GO" id="GO:0009060">
    <property type="term" value="P:aerobic respiration"/>
    <property type="evidence" value="ECO:0007669"/>
    <property type="project" value="TreeGrafter"/>
</dbReference>
<dbReference type="GO" id="GO:0015990">
    <property type="term" value="P:electron transport coupled proton transport"/>
    <property type="evidence" value="ECO:0007669"/>
    <property type="project" value="TreeGrafter"/>
</dbReference>
<dbReference type="GO" id="GO:0015948">
    <property type="term" value="P:methanogenesis"/>
    <property type="evidence" value="ECO:0007669"/>
    <property type="project" value="UniProtKB-KW"/>
</dbReference>
<dbReference type="GO" id="GO:0015945">
    <property type="term" value="P:methanol metabolic process"/>
    <property type="evidence" value="ECO:0007669"/>
    <property type="project" value="UniProtKB-KW"/>
</dbReference>
<dbReference type="FunFam" id="3.40.50.12280:FF:000006">
    <property type="entry name" value="NADH-ubiquinone oxidoreductase 20 kDa subunit,mitochondrial"/>
    <property type="match status" value="1"/>
</dbReference>
<dbReference type="Gene3D" id="3.40.50.12280">
    <property type="match status" value="1"/>
</dbReference>
<dbReference type="HAMAP" id="MF_01356">
    <property type="entry name" value="NDH1_NuoB"/>
    <property type="match status" value="1"/>
</dbReference>
<dbReference type="InterPro" id="IPR006137">
    <property type="entry name" value="NADH_UbQ_OxRdtase-like_20kDa"/>
</dbReference>
<dbReference type="InterPro" id="IPR006138">
    <property type="entry name" value="NADH_UQ_OxRdtase_20Kd_su"/>
</dbReference>
<dbReference type="NCBIfam" id="TIGR01957">
    <property type="entry name" value="nuoB_fam"/>
    <property type="match status" value="1"/>
</dbReference>
<dbReference type="NCBIfam" id="NF005012">
    <property type="entry name" value="PRK06411.1"/>
    <property type="match status" value="1"/>
</dbReference>
<dbReference type="PANTHER" id="PTHR11995">
    <property type="entry name" value="NADH DEHYDROGENASE"/>
    <property type="match status" value="1"/>
</dbReference>
<dbReference type="PANTHER" id="PTHR11995:SF14">
    <property type="entry name" value="NADH DEHYDROGENASE [UBIQUINONE] IRON-SULFUR PROTEIN 7, MITOCHONDRIAL"/>
    <property type="match status" value="1"/>
</dbReference>
<dbReference type="Pfam" id="PF01058">
    <property type="entry name" value="Oxidored_q6"/>
    <property type="match status" value="1"/>
</dbReference>
<dbReference type="SUPFAM" id="SSF56770">
    <property type="entry name" value="HydA/Nqo6-like"/>
    <property type="match status" value="1"/>
</dbReference>
<comment type="function">
    <text evidence="4 5">Component of the F(420)H(2) dehydrogenase (FPO complex) which is part of the energy-conserving F(420)H(2):heterodisulfide oxidoreductase system. The membrane-bound electron transfer system of the complex plays an important role in the metabolism of methylotrophic methanogens when the organisms grow on methanol or methylamines. Catalyzes the oxidation of methanophenazine to dihydromethanophenazine. It shuttles electrons from F(420)H(2), via FAD and iron-sulfur (Fe-S) centers, to methanophenazine (an electron carrier in the membrane). It couples the redox reaction to proton translocation (for every two electrons transferred, two hydrogen ions are translocated across the cytoplasmic membrane), and thus conserves the redox energy in a proton gradient. It also catalyzes the oxidation of F(420)H(2) with quinones such as 2,3-dimethyl-1,4-naphthoquinone, 2-methyl-1,4-naphthoquinone and tetramethyl-p-benzoquinone.</text>
</comment>
<comment type="catalytic activity">
    <reaction evidence="5">
        <text>methanophenazine + reduced coenzyme F420-(gamma-L-Glu)(n) = dihydromethanophenazine + oxidized coenzyme F420-(gamma-L-Glu)(n) + H(+)</text>
        <dbReference type="Rhea" id="RHEA:54752"/>
        <dbReference type="Rhea" id="RHEA-COMP:12939"/>
        <dbReference type="Rhea" id="RHEA-COMP:14378"/>
        <dbReference type="ChEBI" id="CHEBI:15378"/>
        <dbReference type="ChEBI" id="CHEBI:29118"/>
        <dbReference type="ChEBI" id="CHEBI:50375"/>
        <dbReference type="ChEBI" id="CHEBI:133980"/>
        <dbReference type="ChEBI" id="CHEBI:139511"/>
        <dbReference type="EC" id="1.5.98.3"/>
    </reaction>
</comment>
<comment type="cofactor">
    <cofactor evidence="6">
        <name>FAD</name>
        <dbReference type="ChEBI" id="CHEBI:57692"/>
    </cofactor>
</comment>
<comment type="cofactor">
    <cofactor evidence="6">
        <name>[4Fe-4S] cluster</name>
        <dbReference type="ChEBI" id="CHEBI:49883"/>
    </cofactor>
    <text evidence="6">Binds 1 [4Fe-4S] cluster.</text>
</comment>
<comment type="biophysicochemical properties">
    <kinetics>
        <KM evidence="5">7 uM for F(420)H(2) (at 37 degrees Celsius and pH 7)</KM>
        <Vmax evidence="5">17.0 umol/min/mg enzyme (at 37 degrees Celsius and pH 7)</Vmax>
        <text>Measured for the whole complex.</text>
    </kinetics>
    <phDependence>
        <text evidence="5">Optimum pH is 8.5.</text>
    </phDependence>
    <temperatureDependence>
        <text evidence="5">Optimum temperature is 39 degrees Celsius.</text>
    </temperatureDependence>
</comment>
<comment type="subunit">
    <text evidence="4">The FPO complex is composed of at least 13 different subunits.</text>
</comment>
<comment type="subcellular location">
    <subcellularLocation>
        <location evidence="1">Cell inner membrane</location>
        <topology evidence="1">Peripheral membrane protein</topology>
        <orientation evidence="1">Cytoplasmic side</orientation>
    </subcellularLocation>
</comment>
<comment type="similarity">
    <text evidence="6">Belongs to the complex I 20 kDa subunit family.</text>
</comment>
<name>FPOB_METMA</name>
<accession>F1SVH7</accession>
<accession>Q7LWJ5</accession>
<accession>Q9P9G2</accession>
<proteinExistence type="evidence at protein level"/>
<protein>
    <recommendedName>
        <fullName>F(420)H(2) dehydrogenase subunit B</fullName>
        <ecNumber evidence="5">1.5.98.3</ecNumber>
    </recommendedName>
    <alternativeName>
        <fullName>F(420)H(2)-dependent phenazine dehydrogenase subunit B</fullName>
    </alternativeName>
    <alternativeName>
        <fullName>F(420)H(2)-dependent phenazine oxidoreductase subunit B</fullName>
        <shortName>FPO subunit B</shortName>
    </alternativeName>
    <alternativeName>
        <fullName>Methanophenazine hydrogenase subunit B</fullName>
    </alternativeName>
    <alternativeName>
        <fullName>Methanosarcina-phenazine hydrogenase subunit B</fullName>
    </alternativeName>
</protein>
<keyword id="KW-0004">4Fe-4S</keyword>
<keyword id="KW-0997">Cell inner membrane</keyword>
<keyword id="KW-1003">Cell membrane</keyword>
<keyword id="KW-0903">Direct protein sequencing</keyword>
<keyword id="KW-0249">Electron transport</keyword>
<keyword id="KW-0274">FAD</keyword>
<keyword id="KW-0285">Flavoprotein</keyword>
<keyword id="KW-0408">Iron</keyword>
<keyword id="KW-0411">Iron-sulfur</keyword>
<keyword id="KW-0472">Membrane</keyword>
<keyword id="KW-0479">Metal-binding</keyword>
<keyword id="KW-0484">Methanogenesis</keyword>
<keyword id="KW-0485">Methanol utilization</keyword>
<keyword id="KW-0560">Oxidoreductase</keyword>
<keyword id="KW-0813">Transport</keyword>
<feature type="chain" id="PRO_0000423962" description="F(420)H(2) dehydrogenase subunit B">
    <location>
        <begin position="1"/>
        <end position="184"/>
    </location>
</feature>
<feature type="region of interest" description="Disordered" evidence="3">
    <location>
        <begin position="1"/>
        <end position="20"/>
    </location>
</feature>
<feature type="binding site" evidence="2">
    <location>
        <position position="61"/>
    </location>
    <ligand>
        <name>[4Fe-4S] cluster</name>
        <dbReference type="ChEBI" id="CHEBI:49883"/>
    </ligand>
</feature>
<feature type="binding site" evidence="2">
    <location>
        <position position="62"/>
    </location>
    <ligand>
        <name>[4Fe-4S] cluster</name>
        <dbReference type="ChEBI" id="CHEBI:49883"/>
    </ligand>
</feature>
<feature type="binding site" evidence="2">
    <location>
        <position position="126"/>
    </location>
    <ligand>
        <name>[4Fe-4S] cluster</name>
        <dbReference type="ChEBI" id="CHEBI:49883"/>
    </ligand>
</feature>
<feature type="binding site" evidence="2">
    <location>
        <position position="156"/>
    </location>
    <ligand>
        <name>[4Fe-4S] cluster</name>
        <dbReference type="ChEBI" id="CHEBI:49883"/>
    </ligand>
</feature>
<reference key="1">
    <citation type="journal article" date="1997" name="FEMS Microbiol. Lett.">
        <title>Purification and properties of an F420H2 dehydrogenase from Methanosarcina mazei Go1.</title>
        <authorList>
            <person name="Abken H.-J."/>
            <person name="Deppenmeier U."/>
        </authorList>
    </citation>
    <scope>NUCLEOTIDE SEQUENCE [GENOMIC DNA]</scope>
    <scope>FUNCTION</scope>
    <scope>CATALYTIC ACTIVITY</scope>
    <scope>BIOPHYSICOCHEMICAL PROPERTIES</scope>
    <scope>COFACTOR</scope>
    <scope>SUBSTRATE SPECIFICITY</scope>
    <source>
        <strain>ATCC BAA-159 / DSM 3647 / Goe1 / Go1 / JCM 11833 / OCM 88</strain>
    </source>
</reference>
<reference key="2">
    <citation type="journal article" date="2000" name="J. Biol. Chem.">
        <title>The F420H2 dehydrogenase from Methanosarcina mazei is a Redox-driven proton pump closely related to NADH dehydrogenases.</title>
        <authorList>
            <person name="Baumer S."/>
            <person name="Ide T."/>
            <person name="Jacobi C."/>
            <person name="Johann A."/>
            <person name="Gottschalk G."/>
            <person name="Deppenmeier U."/>
        </authorList>
    </citation>
    <scope>NUCLEOTIDE SEQUENCE [GENOMIC DNA]</scope>
    <scope>PROTEIN SEQUENCE</scope>
    <scope>FUNCTION IN THE PROTON TRANSLOCATION</scope>
    <scope>SUBUNIT</scope>
    <scope>COFACTOR</scope>
    <scope>NOMENCLATURE</scope>
    <source>
        <strain>ATCC BAA-159 / DSM 3647 / Goe1 / Go1 / JCM 11833 / OCM 88</strain>
    </source>
</reference>
<reference key="3">
    <citation type="journal article" date="2002" name="J. Mol. Microbiol. Biotechnol.">
        <title>The genome of Methanosarcina mazei: evidence for lateral gene transfer between Bacteria and Archaea.</title>
        <authorList>
            <person name="Deppenmeier U."/>
            <person name="Johann A."/>
            <person name="Hartsch T."/>
            <person name="Merkl R."/>
            <person name="Schmitz R.A."/>
            <person name="Martinez-Arias R."/>
            <person name="Henne A."/>
            <person name="Wiezer A."/>
            <person name="Baeumer S."/>
            <person name="Jacobi C."/>
            <person name="Brueggemann H."/>
            <person name="Lienard T."/>
            <person name="Christmann A."/>
            <person name="Boemecke M."/>
            <person name="Steckel S."/>
            <person name="Bhattacharyya A."/>
            <person name="Lykidis A."/>
            <person name="Overbeek R."/>
            <person name="Klenk H.-P."/>
            <person name="Gunsalus R.P."/>
            <person name="Fritz H.-J."/>
            <person name="Gottschalk G."/>
        </authorList>
    </citation>
    <scope>NUCLEOTIDE SEQUENCE [LARGE SCALE GENOMIC DNA]</scope>
    <source>
        <strain>ATCC BAA-159 / DSM 3647 / Goe1 / Go1 / JCM 11833 / OCM 88</strain>
    </source>
</reference>
<gene>
    <name type="primary">fpoB</name>
    <name type="ordered locus">MM_2490</name>
</gene>
<evidence type="ECO:0000250" key="1"/>
<evidence type="ECO:0000255" key="2"/>
<evidence type="ECO:0000256" key="3">
    <source>
        <dbReference type="SAM" id="MobiDB-lite"/>
    </source>
</evidence>
<evidence type="ECO:0000269" key="4">
    <source>
    </source>
</evidence>
<evidence type="ECO:0000269" key="5">
    <source ref="1"/>
</evidence>
<evidence type="ECO:0000305" key="6"/>
<organism>
    <name type="scientific">Methanosarcina mazei (strain ATCC BAA-159 / DSM 3647 / Goe1 / Go1 / JCM 11833 / OCM 88)</name>
    <name type="common">Methanosarcina frisia</name>
    <dbReference type="NCBI Taxonomy" id="192952"/>
    <lineage>
        <taxon>Archaea</taxon>
        <taxon>Methanobacteriati</taxon>
        <taxon>Methanobacteriota</taxon>
        <taxon>Stenosarchaea group</taxon>
        <taxon>Methanomicrobia</taxon>
        <taxon>Methanosarcinales</taxon>
        <taxon>Methanosarcinaceae</taxon>
        <taxon>Methanosarcina</taxon>
    </lineage>
</organism>
<sequence length="184" mass="20732">MGEVKETKTNNSKENPEEEVPGVITTTTSAIHNFLKKTKAQDIINWGRKNSLWFMTQPMGCCGVEMIATGCAHYDTDRFGIIPRNSPRHADVMIISGYVTKKYLPALKRLWDQMPAPKWVIAMGDCAISGGPFYESYSTVQNIDEIFPIDVYIPGCPPRPEALIQGFVELQEKIKARKDRGTEY</sequence>